<organism>
    <name type="scientific">Human papillomavirus type 54</name>
    <dbReference type="NCBI Taxonomy" id="1671798"/>
    <lineage>
        <taxon>Viruses</taxon>
        <taxon>Monodnaviria</taxon>
        <taxon>Shotokuvirae</taxon>
        <taxon>Cossaviricota</taxon>
        <taxon>Papovaviricetes</taxon>
        <taxon>Zurhausenvirales</taxon>
        <taxon>Papillomaviridae</taxon>
        <taxon>Firstpapillomavirinae</taxon>
        <taxon>Alphapapillomavirus</taxon>
        <taxon>Alphapapillomavirus 13</taxon>
    </lineage>
</organism>
<reference key="1">
    <citation type="submission" date="1995-10" db="EMBL/GenBank/DDBJ databases">
        <authorList>
            <person name="Delius H."/>
        </authorList>
    </citation>
    <scope>NUCLEOTIDE SEQUENCE [GENOMIC DNA]</scope>
</reference>
<gene>
    <name evidence="1" type="primary">L2</name>
</gene>
<dbReference type="EMBL" id="U37488">
    <property type="protein sequence ID" value="AAA79192.1"/>
    <property type="molecule type" value="Genomic_DNA"/>
</dbReference>
<dbReference type="RefSeq" id="NP_043293.1">
    <property type="nucleotide sequence ID" value="NC_001676.1"/>
</dbReference>
<dbReference type="GeneID" id="1497437"/>
<dbReference type="KEGG" id="vg:1497437"/>
<dbReference type="OrthoDB" id="8047at10239"/>
<dbReference type="Proteomes" id="UP000007665">
    <property type="component" value="Segment"/>
</dbReference>
<dbReference type="GO" id="GO:0043657">
    <property type="term" value="C:host cell"/>
    <property type="evidence" value="ECO:0007669"/>
    <property type="project" value="GOC"/>
</dbReference>
<dbReference type="GO" id="GO:0044174">
    <property type="term" value="C:host cell endosome"/>
    <property type="evidence" value="ECO:0007669"/>
    <property type="project" value="UniProtKB-KW"/>
</dbReference>
<dbReference type="GO" id="GO:0044177">
    <property type="term" value="C:host cell Golgi apparatus"/>
    <property type="evidence" value="ECO:0007669"/>
    <property type="project" value="UniProtKB-SubCell"/>
</dbReference>
<dbReference type="GO" id="GO:0042025">
    <property type="term" value="C:host cell nucleus"/>
    <property type="evidence" value="ECO:0007669"/>
    <property type="project" value="UniProtKB-SubCell"/>
</dbReference>
<dbReference type="GO" id="GO:0019028">
    <property type="term" value="C:viral capsid"/>
    <property type="evidence" value="ECO:0007669"/>
    <property type="project" value="UniProtKB-UniRule"/>
</dbReference>
<dbReference type="GO" id="GO:0003677">
    <property type="term" value="F:DNA binding"/>
    <property type="evidence" value="ECO:0007669"/>
    <property type="project" value="UniProtKB-UniRule"/>
</dbReference>
<dbReference type="GO" id="GO:0005198">
    <property type="term" value="F:structural molecule activity"/>
    <property type="evidence" value="ECO:0007669"/>
    <property type="project" value="UniProtKB-UniRule"/>
</dbReference>
<dbReference type="GO" id="GO:0075521">
    <property type="term" value="P:microtubule-dependent intracellular transport of viral material towards nucleus"/>
    <property type="evidence" value="ECO:0007669"/>
    <property type="project" value="UniProtKB-UniRule"/>
</dbReference>
<dbReference type="GO" id="GO:0046718">
    <property type="term" value="P:symbiont entry into host cell"/>
    <property type="evidence" value="ECO:0007669"/>
    <property type="project" value="UniProtKB-KW"/>
</dbReference>
<dbReference type="GO" id="GO:0075732">
    <property type="term" value="P:viral penetration into host nucleus"/>
    <property type="evidence" value="ECO:0007669"/>
    <property type="project" value="UniProtKB-KW"/>
</dbReference>
<dbReference type="HAMAP" id="MF_04003">
    <property type="entry name" value="PPV_L2"/>
    <property type="match status" value="1"/>
</dbReference>
<dbReference type="InterPro" id="IPR000784">
    <property type="entry name" value="Late_L2"/>
</dbReference>
<dbReference type="Pfam" id="PF00513">
    <property type="entry name" value="Late_protein_L2"/>
    <property type="match status" value="1"/>
</dbReference>
<name>VL2_HPV54</name>
<proteinExistence type="inferred from homology"/>
<organismHost>
    <name type="scientific">Homo sapiens</name>
    <name type="common">Human</name>
    <dbReference type="NCBI Taxonomy" id="9606"/>
</organismHost>
<comment type="function">
    <text evidence="1">Minor protein of the capsid that localizes along the inner surface of the virion, within the central cavities beneath the L1 pentamers. Plays a role in capsid stabilization through interaction with the major capsid protein L1. Once the virion enters the host cell, L2 escorts the genomic DNA into the nucleus by promoting escape from the endosomal compartments and traffic through the host Golgi network. Mechanistically, the C-terminus of L2 possesses a cell-penetrating peptide that protudes from the host endosome, interacts with host cytoplasmic retromer cargo and thereby mediates the capsid delivery to the host trans-Golgi network. Plays a role through its interaction with host dynein in the intracellular microtubule-dependent transport of viral capsid toward the nucleus. Mediates the viral genome import into the nucleus through binding to host importins. Once within the nucleus, L2 localizes viral genomes to host PML bodies in order to activate early gene expression for establishment of infection. Later on, promotes late gene expression by interacting with the viral E2 protein and by inhibiting its transcriptional activation functions. During virion assembly, encapsidates the genome by direct interaction with the viral DNA.</text>
</comment>
<comment type="subunit">
    <text evidence="1">Interacts with major capsid protein L1. Interacts with E2; this interaction inhibits E2 transcriptional activity but not the DNA replication function E2. Interacts with host GADD45GIP1. Interacts with host HSPA8; this interaction is required for L2 nuclear translocation. Interacts with host importins KPNB2 and KPNB3. Forms a complex with importin alpha2-beta1 heterodimers via interaction with the importin alpha2 adapter. Interacts with host DYNLT1; this interaction is essential for virus intracellular transport during entry. Interacts (via C-terminus) with host retromer subunits VPS35 and VPS29.</text>
</comment>
<comment type="subcellular location">
    <subcellularLocation>
        <location evidence="1">Virion</location>
    </subcellularLocation>
    <subcellularLocation>
        <location evidence="1">Host nucleus</location>
    </subcellularLocation>
    <subcellularLocation>
        <location evidence="1">Host early endosome</location>
    </subcellularLocation>
    <subcellularLocation>
        <location evidence="1">Host Golgi apparatus</location>
    </subcellularLocation>
</comment>
<comment type="PTM">
    <text evidence="1">Highly phosphorylated.</text>
</comment>
<comment type="similarity">
    <text evidence="1">Belongs to the papillomaviridae L2 protein family.</text>
</comment>
<protein>
    <recommendedName>
        <fullName evidence="1">Minor capsid protein L2</fullName>
    </recommendedName>
</protein>
<accession>Q81023</accession>
<evidence type="ECO:0000255" key="1">
    <source>
        <dbReference type="HAMAP-Rule" id="MF_04003"/>
    </source>
</evidence>
<sequence length="470" mass="50493">MAKARAPRRKRASATQLYQTCKASGTCPSDVIPKVEGTTIADQILRWGSMGVFFGGLGIGTGSGTGGRTGYIPLGRPSTTLEPGPPVRPAGAVETVAPSDPSIVSLVEESSVVDVGAPTPTIPSQGGFEIATSSDATPAILDVTSTTTPIRVSITSHDNPIYTEPSLLDPPPPVQMDGRVLVSTSTLQSSTAENIPMDTFIIMQDHIGTTTSTPIPRPPARPRLGLYSRALQQVPVQDPAFLQQPSSLITYDNPVYEGNPDVTLHFEQPTIHNAPDPAFMDIFALHRPALTTRRGVVRYSRVGDRATLHTRSGLQLKPRVHFFQDLSPIAHVPEEIELHPLISANNTSINNGLYSDIYDVYADTDFADTGGFSSSTVSHSSVQTALQTTSIPSQYGNTTVPLTASSPYTPIPTSFRPSSGHTPFVPARPIFPQTPIAVNGGDFYLHPSYTYVRKRRKRFPYFLADGYVAA</sequence>
<feature type="chain" id="PRO_0000133620" description="Minor capsid protein L2">
    <location>
        <begin position="1"/>
        <end position="470"/>
    </location>
</feature>
<feature type="short sequence motif" description="Nuclear localization signal" evidence="1">
    <location>
        <begin position="1"/>
        <end position="12"/>
    </location>
</feature>
<feature type="short sequence motif" description="Nuclear localization signal" evidence="1">
    <location>
        <begin position="451"/>
        <end position="459"/>
    </location>
</feature>
<feature type="disulfide bond" evidence="1">
    <location>
        <begin position="21"/>
        <end position="27"/>
    </location>
</feature>
<keyword id="KW-0167">Capsid protein</keyword>
<keyword id="KW-1176">Cytoplasmic inwards viral transport</keyword>
<keyword id="KW-1015">Disulfide bond</keyword>
<keyword id="KW-0238">DNA-binding</keyword>
<keyword id="KW-1039">Host endosome</keyword>
<keyword id="KW-1040">Host Golgi apparatus</keyword>
<keyword id="KW-1048">Host nucleus</keyword>
<keyword id="KW-0945">Host-virus interaction</keyword>
<keyword id="KW-0426">Late protein</keyword>
<keyword id="KW-1177">Microtubular inwards viral transport</keyword>
<keyword id="KW-0597">Phosphoprotein</keyword>
<keyword id="KW-1185">Reference proteome</keyword>
<keyword id="KW-1163">Viral penetration into host nucleus</keyword>
<keyword id="KW-0946">Virion</keyword>
<keyword id="KW-1160">Virus entry into host cell</keyword>